<dbReference type="EMBL" id="BA000002">
    <property type="protein sequence ID" value="BAA79401.2"/>
    <property type="molecule type" value="Genomic_DNA"/>
</dbReference>
<dbReference type="PIR" id="E72738">
    <property type="entry name" value="E72738"/>
</dbReference>
<dbReference type="RefSeq" id="WP_010865745.1">
    <property type="nucleotide sequence ID" value="NC_000854.2"/>
</dbReference>
<dbReference type="SMR" id="Q9YEZ5"/>
<dbReference type="STRING" id="272557.APE_0441.1"/>
<dbReference type="EnsemblBacteria" id="BAA79401">
    <property type="protein sequence ID" value="BAA79401"/>
    <property type="gene ID" value="APE_0441.1"/>
</dbReference>
<dbReference type="GeneID" id="1444627"/>
<dbReference type="KEGG" id="ape:APE_0441.1"/>
<dbReference type="eggNOG" id="arCOG00488">
    <property type="taxonomic scope" value="Archaea"/>
</dbReference>
<dbReference type="Proteomes" id="UP000002518">
    <property type="component" value="Chromosome"/>
</dbReference>
<dbReference type="GO" id="GO:0003677">
    <property type="term" value="F:DNA binding"/>
    <property type="evidence" value="ECO:0007669"/>
    <property type="project" value="UniProtKB-UniRule"/>
</dbReference>
<dbReference type="GO" id="GO:0030337">
    <property type="term" value="F:DNA polymerase processivity factor activity"/>
    <property type="evidence" value="ECO:0007669"/>
    <property type="project" value="UniProtKB-UniRule"/>
</dbReference>
<dbReference type="GO" id="GO:0006272">
    <property type="term" value="P:leading strand elongation"/>
    <property type="evidence" value="ECO:0007669"/>
    <property type="project" value="TreeGrafter"/>
</dbReference>
<dbReference type="GO" id="GO:0006275">
    <property type="term" value="P:regulation of DNA replication"/>
    <property type="evidence" value="ECO:0007669"/>
    <property type="project" value="UniProtKB-UniRule"/>
</dbReference>
<dbReference type="CDD" id="cd00577">
    <property type="entry name" value="PCNA"/>
    <property type="match status" value="1"/>
</dbReference>
<dbReference type="Gene3D" id="3.70.10.10">
    <property type="match status" value="1"/>
</dbReference>
<dbReference type="HAMAP" id="MF_00317">
    <property type="entry name" value="DNApol_clamp_arch"/>
    <property type="match status" value="1"/>
</dbReference>
<dbReference type="InterPro" id="IPR046938">
    <property type="entry name" value="DNA_clamp_sf"/>
</dbReference>
<dbReference type="InterPro" id="IPR000730">
    <property type="entry name" value="Pr_cel_nuc_antig"/>
</dbReference>
<dbReference type="InterPro" id="IPR022649">
    <property type="entry name" value="Pr_cel_nuc_antig_C"/>
</dbReference>
<dbReference type="InterPro" id="IPR022648">
    <property type="entry name" value="Pr_cel_nuc_antig_N"/>
</dbReference>
<dbReference type="NCBIfam" id="NF002221">
    <property type="entry name" value="PRK01115.1-4"/>
    <property type="match status" value="1"/>
</dbReference>
<dbReference type="PANTHER" id="PTHR11352">
    <property type="entry name" value="PROLIFERATING CELL NUCLEAR ANTIGEN"/>
    <property type="match status" value="1"/>
</dbReference>
<dbReference type="PANTHER" id="PTHR11352:SF0">
    <property type="entry name" value="PROLIFERATING CELL NUCLEAR ANTIGEN"/>
    <property type="match status" value="1"/>
</dbReference>
<dbReference type="Pfam" id="PF02747">
    <property type="entry name" value="PCNA_C"/>
    <property type="match status" value="1"/>
</dbReference>
<dbReference type="Pfam" id="PF00705">
    <property type="entry name" value="PCNA_N"/>
    <property type="match status" value="1"/>
</dbReference>
<dbReference type="PRINTS" id="PR00339">
    <property type="entry name" value="PCNACYCLIN"/>
</dbReference>
<dbReference type="SUPFAM" id="SSF55979">
    <property type="entry name" value="DNA clamp"/>
    <property type="match status" value="2"/>
</dbReference>
<gene>
    <name evidence="1" type="primary">pcn3</name>
    <name type="synonym">pcnB2</name>
    <name type="ordered locus">APE_0441.1</name>
</gene>
<keyword id="KW-0235">DNA replication</keyword>
<keyword id="KW-0238">DNA-binding</keyword>
<keyword id="KW-1185">Reference proteome</keyword>
<evidence type="ECO:0000255" key="1">
    <source>
        <dbReference type="HAMAP-Rule" id="MF_00317"/>
    </source>
</evidence>
<proteinExistence type="inferred from homology"/>
<organism>
    <name type="scientific">Aeropyrum pernix (strain ATCC 700893 / DSM 11879 / JCM 9820 / NBRC 100138 / K1)</name>
    <dbReference type="NCBI Taxonomy" id="272557"/>
    <lineage>
        <taxon>Archaea</taxon>
        <taxon>Thermoproteota</taxon>
        <taxon>Thermoprotei</taxon>
        <taxon>Desulfurococcales</taxon>
        <taxon>Desulfurococcaceae</taxon>
        <taxon>Aeropyrum</taxon>
    </lineage>
</organism>
<name>PCNA3_AERPE</name>
<accession>Q9YEZ5</accession>
<reference key="1">
    <citation type="journal article" date="1999" name="DNA Res.">
        <title>Complete genome sequence of an aerobic hyper-thermophilic crenarchaeon, Aeropyrum pernix K1.</title>
        <authorList>
            <person name="Kawarabayasi Y."/>
            <person name="Hino Y."/>
            <person name="Horikawa H."/>
            <person name="Yamazaki S."/>
            <person name="Haikawa Y."/>
            <person name="Jin-no K."/>
            <person name="Takahashi M."/>
            <person name="Sekine M."/>
            <person name="Baba S."/>
            <person name="Ankai A."/>
            <person name="Kosugi H."/>
            <person name="Hosoyama A."/>
            <person name="Fukui S."/>
            <person name="Nagai Y."/>
            <person name="Nishijima K."/>
            <person name="Nakazawa H."/>
            <person name="Takamiya M."/>
            <person name="Masuda S."/>
            <person name="Funahashi T."/>
            <person name="Tanaka T."/>
            <person name="Kudoh Y."/>
            <person name="Yamazaki J."/>
            <person name="Kushida N."/>
            <person name="Oguchi A."/>
            <person name="Aoki K."/>
            <person name="Kubota K."/>
            <person name="Nakamura Y."/>
            <person name="Nomura N."/>
            <person name="Sako Y."/>
            <person name="Kikuchi H."/>
        </authorList>
    </citation>
    <scope>NUCLEOTIDE SEQUENCE [LARGE SCALE GENOMIC DNA]</scope>
    <source>
        <strain>ATCC 700893 / DSM 11879 / JCM 9820 / NBRC 100138 / K1</strain>
    </source>
</reference>
<comment type="function">
    <text evidence="1">Sliding clamp subunit that acts as a moving platform for DNA processing. Responsible for tethering the catalytic subunit of DNA polymerase and other proteins to DNA during high-speed replication.</text>
</comment>
<comment type="subunit">
    <text evidence="1">Homotrimer. The subunits circularize to form a toroid; DNA passes through its center. Replication factor C (RFC) is required to load the toroid on the DNA.</text>
</comment>
<comment type="similarity">
    <text evidence="1">Belongs to the PCNA family.</text>
</comment>
<protein>
    <recommendedName>
        <fullName evidence="1">DNA polymerase sliding clamp 3</fullName>
    </recommendedName>
    <alternativeName>
        <fullName evidence="1">DNA polymerase sliding clamp B2</fullName>
    </alternativeName>
    <alternativeName>
        <fullName evidence="1">Proliferating cell nuclear antigen homolog 3</fullName>
        <shortName evidence="1">PCNA 3</shortName>
    </alternativeName>
</protein>
<feature type="chain" id="PRO_0000149191" description="DNA polymerase sliding clamp 3">
    <location>
        <begin position="1"/>
        <end position="249"/>
    </location>
</feature>
<sequence>MADARFYFSDARTWRYMVASIEKIIEEGVFVATGEGLSLRALDTSHVAMVDLYYPNTAFIEYDIGGESVEFGVSFDLLSKVLRRARKEDELVLEVEGSRLAVKLKSRGERTFRIPQVVMTYEKLPEPKVSFTVRARMLGSTFREAVRDLEPHSETLTLRALEDALLLVGSSEMATVEIELSQSRGSLLDYEAESQDRASYSIEYFSEMLSAAQAADAVVVSFSEDAPVRVDMEYLGGGRLTFYVSPKIE</sequence>